<comment type="function">
    <text evidence="1">Involved in the degradation and recycling of damaged RNA. It is itself a target for degradation by the ATP-dependent protease Lon.</text>
</comment>
<comment type="subcellular location">
    <subcellularLocation>
        <location evidence="1">Cytoplasm</location>
    </subcellularLocation>
</comment>
<comment type="similarity">
    <text evidence="1">Belongs to the SymE family.</text>
</comment>
<reference key="1">
    <citation type="journal article" date="2011" name="J. Bacteriol.">
        <title>Comparative genomics of 28 Salmonella enterica isolates: evidence for CRISPR-mediated adaptive sublineage evolution.</title>
        <authorList>
            <person name="Fricke W.F."/>
            <person name="Mammel M.K."/>
            <person name="McDermott P.F."/>
            <person name="Tartera C."/>
            <person name="White D.G."/>
            <person name="Leclerc J.E."/>
            <person name="Ravel J."/>
            <person name="Cebula T.A."/>
        </authorList>
    </citation>
    <scope>NUCLEOTIDE SEQUENCE [LARGE SCALE GENOMIC DNA]</scope>
    <source>
        <strain>SL476</strain>
    </source>
</reference>
<accession>B4TGA3</accession>
<feature type="chain" id="PRO_1000138402" description="Endoribonuclease SymE">
    <location>
        <begin position="1"/>
        <end position="110"/>
    </location>
</feature>
<feature type="domain" description="SpoVT-AbrB" evidence="2">
    <location>
        <begin position="29"/>
        <end position="74"/>
    </location>
</feature>
<protein>
    <recommendedName>
        <fullName evidence="1">Endoribonuclease SymE</fullName>
        <ecNumber evidence="1">3.1.-.-</ecNumber>
    </recommendedName>
</protein>
<proteinExistence type="inferred from homology"/>
<gene>
    <name evidence="1" type="primary">symE</name>
    <name type="ordered locus">SeHA_C4929</name>
</gene>
<dbReference type="EC" id="3.1.-.-" evidence="1"/>
<dbReference type="EMBL" id="CP001120">
    <property type="protein sequence ID" value="ACF69668.1"/>
    <property type="molecule type" value="Genomic_DNA"/>
</dbReference>
<dbReference type="RefSeq" id="WP_001520547.1">
    <property type="nucleotide sequence ID" value="NC_011083.1"/>
</dbReference>
<dbReference type="KEGG" id="seh:SeHA_C4929"/>
<dbReference type="HOGENOM" id="CLU_151239_0_0_6"/>
<dbReference type="Proteomes" id="UP000001866">
    <property type="component" value="Chromosome"/>
</dbReference>
<dbReference type="GO" id="GO:0005737">
    <property type="term" value="C:cytoplasm"/>
    <property type="evidence" value="ECO:0007669"/>
    <property type="project" value="UniProtKB-SubCell"/>
</dbReference>
<dbReference type="GO" id="GO:0003677">
    <property type="term" value="F:DNA binding"/>
    <property type="evidence" value="ECO:0007669"/>
    <property type="project" value="UniProtKB-KW"/>
</dbReference>
<dbReference type="GO" id="GO:0003723">
    <property type="term" value="F:RNA binding"/>
    <property type="evidence" value="ECO:0007669"/>
    <property type="project" value="UniProtKB-KW"/>
</dbReference>
<dbReference type="GO" id="GO:0004521">
    <property type="term" value="F:RNA endonuclease activity"/>
    <property type="evidence" value="ECO:0007669"/>
    <property type="project" value="UniProtKB-UniRule"/>
</dbReference>
<dbReference type="GO" id="GO:0016070">
    <property type="term" value="P:RNA metabolic process"/>
    <property type="evidence" value="ECO:0007669"/>
    <property type="project" value="InterPro"/>
</dbReference>
<dbReference type="HAMAP" id="MF_01193">
    <property type="entry name" value="Endoribonucl_SymE"/>
    <property type="match status" value="1"/>
</dbReference>
<dbReference type="InterPro" id="IPR007159">
    <property type="entry name" value="SpoVT-AbrB_dom"/>
</dbReference>
<dbReference type="InterPro" id="IPR014944">
    <property type="entry name" value="Toxin_SymE-like"/>
</dbReference>
<dbReference type="InterPro" id="IPR020883">
    <property type="entry name" value="TypeI_TA_SymE"/>
</dbReference>
<dbReference type="NCBIfam" id="NF010128">
    <property type="entry name" value="PRK13605.1"/>
    <property type="match status" value="1"/>
</dbReference>
<dbReference type="Pfam" id="PF08845">
    <property type="entry name" value="SymE_toxin"/>
    <property type="match status" value="1"/>
</dbReference>
<dbReference type="PROSITE" id="PS51740">
    <property type="entry name" value="SPOVT_ABRB"/>
    <property type="match status" value="1"/>
</dbReference>
<sequence>MTTVHSIADPCDPEVSPTNNRHLTVSYASRYPDYTRIPALTMKGQWLEAAGFATGTEVDVRVMNGCIVLTAQQPQPEESELMQSLRQVSKLSARKQKQVQAFIDVMAGSK</sequence>
<evidence type="ECO:0000255" key="1">
    <source>
        <dbReference type="HAMAP-Rule" id="MF_01193"/>
    </source>
</evidence>
<evidence type="ECO:0000255" key="2">
    <source>
        <dbReference type="PROSITE-ProRule" id="PRU01076"/>
    </source>
</evidence>
<keyword id="KW-0963">Cytoplasm</keyword>
<keyword id="KW-0238">DNA-binding</keyword>
<keyword id="KW-0255">Endonuclease</keyword>
<keyword id="KW-0378">Hydrolase</keyword>
<keyword id="KW-0540">Nuclease</keyword>
<keyword id="KW-0694">RNA-binding</keyword>
<name>SYME_SALHS</name>
<organism>
    <name type="scientific">Salmonella heidelberg (strain SL476)</name>
    <dbReference type="NCBI Taxonomy" id="454169"/>
    <lineage>
        <taxon>Bacteria</taxon>
        <taxon>Pseudomonadati</taxon>
        <taxon>Pseudomonadota</taxon>
        <taxon>Gammaproteobacteria</taxon>
        <taxon>Enterobacterales</taxon>
        <taxon>Enterobacteriaceae</taxon>
        <taxon>Salmonella</taxon>
    </lineage>
</organism>